<name>YQGF_MYCGA</name>
<gene>
    <name type="ordered locus">MYCGA1230</name>
    <name type="ORF">MGA_0836</name>
</gene>
<reference key="1">
    <citation type="journal article" date="2003" name="Microbiology">
        <title>The complete genome sequence of the avian pathogen Mycoplasma gallisepticum strain R(low).</title>
        <authorList>
            <person name="Papazisi L."/>
            <person name="Gorton T.S."/>
            <person name="Kutish G."/>
            <person name="Markham P.F."/>
            <person name="Browning G.F."/>
            <person name="Nguyen D.K."/>
            <person name="Swartzell S."/>
            <person name="Madan A."/>
            <person name="Mahairas G."/>
            <person name="Geary S.J."/>
        </authorList>
    </citation>
    <scope>NUCLEOTIDE SEQUENCE [LARGE SCALE GENOMIC DNA]</scope>
    <source>
        <strain>R(low / passage 15 / clone 2)</strain>
    </source>
</reference>
<feature type="chain" id="PRO_0000172090" description="Putative pre-16S rRNA nuclease">
    <location>
        <begin position="1"/>
        <end position="142"/>
    </location>
</feature>
<protein>
    <recommendedName>
        <fullName evidence="1">Putative pre-16S rRNA nuclease</fullName>
        <ecNumber evidence="1">3.1.-.-</ecNumber>
    </recommendedName>
</protein>
<accession>Q7NBY7</accession>
<dbReference type="EC" id="3.1.-.-" evidence="1"/>
<dbReference type="EMBL" id="AE015450">
    <property type="protein sequence ID" value="AAP56473.1"/>
    <property type="molecule type" value="Genomic_DNA"/>
</dbReference>
<dbReference type="SMR" id="Q7NBY7"/>
<dbReference type="KEGG" id="mga:MGA_0836"/>
<dbReference type="PATRIC" id="fig|233150.7.peg.137"/>
<dbReference type="HOGENOM" id="CLU_098240_2_1_14"/>
<dbReference type="OrthoDB" id="9796140at2"/>
<dbReference type="Proteomes" id="UP000001418">
    <property type="component" value="Chromosome"/>
</dbReference>
<dbReference type="GO" id="GO:0005829">
    <property type="term" value="C:cytosol"/>
    <property type="evidence" value="ECO:0007669"/>
    <property type="project" value="TreeGrafter"/>
</dbReference>
<dbReference type="GO" id="GO:0004518">
    <property type="term" value="F:nuclease activity"/>
    <property type="evidence" value="ECO:0007669"/>
    <property type="project" value="UniProtKB-KW"/>
</dbReference>
<dbReference type="GO" id="GO:0000967">
    <property type="term" value="P:rRNA 5'-end processing"/>
    <property type="evidence" value="ECO:0007669"/>
    <property type="project" value="UniProtKB-UniRule"/>
</dbReference>
<dbReference type="CDD" id="cd16964">
    <property type="entry name" value="YqgF"/>
    <property type="match status" value="1"/>
</dbReference>
<dbReference type="Gene3D" id="3.30.420.140">
    <property type="entry name" value="YqgF/RNase H-like domain"/>
    <property type="match status" value="1"/>
</dbReference>
<dbReference type="HAMAP" id="MF_00651">
    <property type="entry name" value="Nuclease_YqgF"/>
    <property type="match status" value="1"/>
</dbReference>
<dbReference type="InterPro" id="IPR012337">
    <property type="entry name" value="RNaseH-like_sf"/>
</dbReference>
<dbReference type="InterPro" id="IPR005227">
    <property type="entry name" value="YqgF"/>
</dbReference>
<dbReference type="InterPro" id="IPR006641">
    <property type="entry name" value="YqgF/RNaseH-like_dom"/>
</dbReference>
<dbReference type="InterPro" id="IPR037027">
    <property type="entry name" value="YqgF/RNaseH-like_dom_sf"/>
</dbReference>
<dbReference type="NCBIfam" id="TIGR00250">
    <property type="entry name" value="RNAse_H_YqgF"/>
    <property type="match status" value="1"/>
</dbReference>
<dbReference type="PANTHER" id="PTHR33317">
    <property type="entry name" value="POLYNUCLEOTIDYL TRANSFERASE, RIBONUCLEASE H-LIKE SUPERFAMILY PROTEIN"/>
    <property type="match status" value="1"/>
</dbReference>
<dbReference type="PANTHER" id="PTHR33317:SF4">
    <property type="entry name" value="POLYNUCLEOTIDYL TRANSFERASE, RIBONUCLEASE H-LIKE SUPERFAMILY PROTEIN"/>
    <property type="match status" value="1"/>
</dbReference>
<dbReference type="Pfam" id="PF03652">
    <property type="entry name" value="RuvX"/>
    <property type="match status" value="1"/>
</dbReference>
<dbReference type="SMART" id="SM00732">
    <property type="entry name" value="YqgFc"/>
    <property type="match status" value="1"/>
</dbReference>
<dbReference type="SUPFAM" id="SSF53098">
    <property type="entry name" value="Ribonuclease H-like"/>
    <property type="match status" value="1"/>
</dbReference>
<sequence length="142" mass="16438">MYYVALDVGSRTLGIATGDGEFKIASPYCVISFNQYDFRQCLAELKEKTASFFYDFKFVIGMPKNIDQTKSSTTEMVENFIELLKANYKNEVIIYDESYTSIIADQLLIDNQIKAKKRKEKIDKLAAFVILQSFFDDDRYPK</sequence>
<keyword id="KW-0963">Cytoplasm</keyword>
<keyword id="KW-0378">Hydrolase</keyword>
<keyword id="KW-0540">Nuclease</keyword>
<keyword id="KW-1185">Reference proteome</keyword>
<keyword id="KW-0690">Ribosome biogenesis</keyword>
<organism>
    <name type="scientific">Mycoplasmoides gallisepticum (strain R(low / passage 15 / clone 2))</name>
    <name type="common">Mycoplasma gallisepticum</name>
    <dbReference type="NCBI Taxonomy" id="710127"/>
    <lineage>
        <taxon>Bacteria</taxon>
        <taxon>Bacillati</taxon>
        <taxon>Mycoplasmatota</taxon>
        <taxon>Mycoplasmoidales</taxon>
        <taxon>Mycoplasmoidaceae</taxon>
        <taxon>Mycoplasmoides</taxon>
    </lineage>
</organism>
<evidence type="ECO:0000255" key="1">
    <source>
        <dbReference type="HAMAP-Rule" id="MF_00651"/>
    </source>
</evidence>
<proteinExistence type="inferred from homology"/>
<comment type="function">
    <text evidence="1">Could be a nuclease involved in processing of the 5'-end of pre-16S rRNA.</text>
</comment>
<comment type="subcellular location">
    <subcellularLocation>
        <location evidence="1">Cytoplasm</location>
    </subcellularLocation>
</comment>
<comment type="similarity">
    <text evidence="1">Belongs to the YqgF nuclease family.</text>
</comment>